<keyword id="KW-1185">Reference proteome</keyword>
<keyword id="KW-0687">Ribonucleoprotein</keyword>
<keyword id="KW-0689">Ribosomal protein</keyword>
<keyword id="KW-0694">RNA-binding</keyword>
<keyword id="KW-0699">rRNA-binding</keyword>
<sequence>MANHQSARKRIRANEAKHLHNRYQLKTCRTAIKQLKQVKDKEQAVTLFKTVVAMLDKSAKRHIIHKNKAANTKSKLAQHINRL</sequence>
<gene>
    <name evidence="1" type="primary">rpsT</name>
    <name type="ordered locus">Aasi_0100</name>
</gene>
<organism>
    <name type="scientific">Amoebophilus asiaticus (strain 5a2)</name>
    <dbReference type="NCBI Taxonomy" id="452471"/>
    <lineage>
        <taxon>Bacteria</taxon>
        <taxon>Pseudomonadati</taxon>
        <taxon>Bacteroidota</taxon>
        <taxon>Cytophagia</taxon>
        <taxon>Cytophagales</taxon>
        <taxon>Amoebophilaceae</taxon>
        <taxon>Candidatus Amoebophilus</taxon>
    </lineage>
</organism>
<feature type="chain" id="PRO_1000126394" description="Small ribosomal subunit protein bS20">
    <location>
        <begin position="1"/>
        <end position="83"/>
    </location>
</feature>
<evidence type="ECO:0000255" key="1">
    <source>
        <dbReference type="HAMAP-Rule" id="MF_00500"/>
    </source>
</evidence>
<evidence type="ECO:0000305" key="2"/>
<proteinExistence type="inferred from homology"/>
<name>RS20_AMOA5</name>
<dbReference type="EMBL" id="CP001102">
    <property type="protein sequence ID" value="ACE05548.1"/>
    <property type="molecule type" value="Genomic_DNA"/>
</dbReference>
<dbReference type="RefSeq" id="WP_012472318.1">
    <property type="nucleotide sequence ID" value="NC_010830.1"/>
</dbReference>
<dbReference type="SMR" id="B3EUC9"/>
<dbReference type="STRING" id="452471.Aasi_0100"/>
<dbReference type="KEGG" id="aas:Aasi_0100"/>
<dbReference type="eggNOG" id="COG0268">
    <property type="taxonomic scope" value="Bacteria"/>
</dbReference>
<dbReference type="HOGENOM" id="CLU_160655_3_2_10"/>
<dbReference type="OrthoDB" id="9808392at2"/>
<dbReference type="Proteomes" id="UP000001227">
    <property type="component" value="Chromosome"/>
</dbReference>
<dbReference type="GO" id="GO:0005829">
    <property type="term" value="C:cytosol"/>
    <property type="evidence" value="ECO:0007669"/>
    <property type="project" value="TreeGrafter"/>
</dbReference>
<dbReference type="GO" id="GO:0015935">
    <property type="term" value="C:small ribosomal subunit"/>
    <property type="evidence" value="ECO:0007669"/>
    <property type="project" value="TreeGrafter"/>
</dbReference>
<dbReference type="GO" id="GO:0070181">
    <property type="term" value="F:small ribosomal subunit rRNA binding"/>
    <property type="evidence" value="ECO:0007669"/>
    <property type="project" value="TreeGrafter"/>
</dbReference>
<dbReference type="GO" id="GO:0003735">
    <property type="term" value="F:structural constituent of ribosome"/>
    <property type="evidence" value="ECO:0007669"/>
    <property type="project" value="InterPro"/>
</dbReference>
<dbReference type="GO" id="GO:0006412">
    <property type="term" value="P:translation"/>
    <property type="evidence" value="ECO:0007669"/>
    <property type="project" value="UniProtKB-UniRule"/>
</dbReference>
<dbReference type="Gene3D" id="1.20.58.110">
    <property type="entry name" value="Ribosomal protein S20"/>
    <property type="match status" value="1"/>
</dbReference>
<dbReference type="HAMAP" id="MF_00500">
    <property type="entry name" value="Ribosomal_bS20"/>
    <property type="match status" value="1"/>
</dbReference>
<dbReference type="InterPro" id="IPR002583">
    <property type="entry name" value="Ribosomal_bS20"/>
</dbReference>
<dbReference type="InterPro" id="IPR036510">
    <property type="entry name" value="Ribosomal_bS20_sf"/>
</dbReference>
<dbReference type="NCBIfam" id="TIGR00029">
    <property type="entry name" value="S20"/>
    <property type="match status" value="1"/>
</dbReference>
<dbReference type="PANTHER" id="PTHR33398">
    <property type="entry name" value="30S RIBOSOMAL PROTEIN S20"/>
    <property type="match status" value="1"/>
</dbReference>
<dbReference type="PANTHER" id="PTHR33398:SF1">
    <property type="entry name" value="SMALL RIBOSOMAL SUBUNIT PROTEIN BS20C"/>
    <property type="match status" value="1"/>
</dbReference>
<dbReference type="Pfam" id="PF01649">
    <property type="entry name" value="Ribosomal_S20p"/>
    <property type="match status" value="1"/>
</dbReference>
<dbReference type="SUPFAM" id="SSF46992">
    <property type="entry name" value="Ribosomal protein S20"/>
    <property type="match status" value="1"/>
</dbReference>
<accession>B3EUC9</accession>
<reference key="1">
    <citation type="journal article" date="2010" name="J. Bacteriol.">
        <title>The genome of the amoeba symbiont 'Candidatus Amoebophilus asiaticus' reveals common mechanisms for host cell interaction among amoeba-associated bacteria.</title>
        <authorList>
            <person name="Schmitz-Esser S."/>
            <person name="Tischler P."/>
            <person name="Arnold R."/>
            <person name="Montanaro J."/>
            <person name="Wagner M."/>
            <person name="Rattei T."/>
            <person name="Horn M."/>
        </authorList>
    </citation>
    <scope>NUCLEOTIDE SEQUENCE [LARGE SCALE GENOMIC DNA]</scope>
    <source>
        <strain>5a2</strain>
    </source>
</reference>
<protein>
    <recommendedName>
        <fullName evidence="1">Small ribosomal subunit protein bS20</fullName>
    </recommendedName>
    <alternativeName>
        <fullName evidence="2">30S ribosomal protein S20</fullName>
    </alternativeName>
</protein>
<comment type="function">
    <text evidence="1">Binds directly to 16S ribosomal RNA.</text>
</comment>
<comment type="similarity">
    <text evidence="1">Belongs to the bacterial ribosomal protein bS20 family.</text>
</comment>